<organism>
    <name type="scientific">Alkalilimnicola ehrlichii (strain ATCC BAA-1101 / DSM 17681 / MLHE-1)</name>
    <dbReference type="NCBI Taxonomy" id="187272"/>
    <lineage>
        <taxon>Bacteria</taxon>
        <taxon>Pseudomonadati</taxon>
        <taxon>Pseudomonadota</taxon>
        <taxon>Gammaproteobacteria</taxon>
        <taxon>Chromatiales</taxon>
        <taxon>Ectothiorhodospiraceae</taxon>
        <taxon>Alkalilimnicola</taxon>
    </lineage>
</organism>
<evidence type="ECO:0000255" key="1">
    <source>
        <dbReference type="HAMAP-Rule" id="MF_01517"/>
    </source>
</evidence>
<sequence length="326" mass="35215">MKAPVRVAVTGAAGQIGYSLLFRIASGDMLGKDQPVILQLLEITPALEALKGVVMELEDCAFPLVSGITTSDKAEEAFKDADIALLVGARPRGPGMERKDLLEANAAIFSAQGKALNDAASRDVKVLVVGNPANTNSLIAQRNAPDLDPRNFTAMTRLDHNRAVAQLANKTGAHNTEIKNMIIWGNHSATQYPDISKTKVKGEAAPGLVERDWYENDFIPTVQQRGAAIIKARGASSAASAASSAIDHIRDWVLGTPEGEWTSMAVPSDGSYGIEKGIIYSYPCVCRNGDYEIVQDLEIDEFSREKMQATEKELVEERDAVEHLLP</sequence>
<accession>Q0ABE6</accession>
<feature type="chain" id="PRO_0000294373" description="Malate dehydrogenase">
    <location>
        <begin position="1"/>
        <end position="326"/>
    </location>
</feature>
<feature type="active site" description="Proton acceptor" evidence="1">
    <location>
        <position position="187"/>
    </location>
</feature>
<feature type="binding site" evidence="1">
    <location>
        <begin position="11"/>
        <end position="17"/>
    </location>
    <ligand>
        <name>NAD(+)</name>
        <dbReference type="ChEBI" id="CHEBI:57540"/>
    </ligand>
</feature>
<feature type="binding site" evidence="1">
    <location>
        <position position="92"/>
    </location>
    <ligand>
        <name>substrate</name>
    </ligand>
</feature>
<feature type="binding site" evidence="1">
    <location>
        <position position="98"/>
    </location>
    <ligand>
        <name>substrate</name>
    </ligand>
</feature>
<feature type="binding site" evidence="1">
    <location>
        <position position="105"/>
    </location>
    <ligand>
        <name>NAD(+)</name>
        <dbReference type="ChEBI" id="CHEBI:57540"/>
    </ligand>
</feature>
<feature type="binding site" evidence="1">
    <location>
        <position position="112"/>
    </location>
    <ligand>
        <name>NAD(+)</name>
        <dbReference type="ChEBI" id="CHEBI:57540"/>
    </ligand>
</feature>
<feature type="binding site" evidence="1">
    <location>
        <begin position="129"/>
        <end position="131"/>
    </location>
    <ligand>
        <name>NAD(+)</name>
        <dbReference type="ChEBI" id="CHEBI:57540"/>
    </ligand>
</feature>
<feature type="binding site" evidence="1">
    <location>
        <position position="131"/>
    </location>
    <ligand>
        <name>substrate</name>
    </ligand>
</feature>
<feature type="binding site" evidence="1">
    <location>
        <position position="162"/>
    </location>
    <ligand>
        <name>substrate</name>
    </ligand>
</feature>
<dbReference type="EC" id="1.1.1.37" evidence="1"/>
<dbReference type="EMBL" id="CP000453">
    <property type="protein sequence ID" value="ABI55841.1"/>
    <property type="molecule type" value="Genomic_DNA"/>
</dbReference>
<dbReference type="RefSeq" id="WP_011628236.1">
    <property type="nucleotide sequence ID" value="NC_008340.1"/>
</dbReference>
<dbReference type="SMR" id="Q0ABE6"/>
<dbReference type="KEGG" id="aeh:Mlg_0487"/>
<dbReference type="eggNOG" id="COG0039">
    <property type="taxonomic scope" value="Bacteria"/>
</dbReference>
<dbReference type="HOGENOM" id="CLU_040727_2_0_6"/>
<dbReference type="OrthoDB" id="9802969at2"/>
<dbReference type="Proteomes" id="UP000001962">
    <property type="component" value="Chromosome"/>
</dbReference>
<dbReference type="GO" id="GO:0030060">
    <property type="term" value="F:L-malate dehydrogenase (NAD+) activity"/>
    <property type="evidence" value="ECO:0007669"/>
    <property type="project" value="UniProtKB-UniRule"/>
</dbReference>
<dbReference type="GO" id="GO:0006108">
    <property type="term" value="P:malate metabolic process"/>
    <property type="evidence" value="ECO:0007669"/>
    <property type="project" value="InterPro"/>
</dbReference>
<dbReference type="GO" id="GO:0006099">
    <property type="term" value="P:tricarboxylic acid cycle"/>
    <property type="evidence" value="ECO:0007669"/>
    <property type="project" value="UniProtKB-UniRule"/>
</dbReference>
<dbReference type="CDD" id="cd01338">
    <property type="entry name" value="MDH_chloroplast-like"/>
    <property type="match status" value="1"/>
</dbReference>
<dbReference type="FunFam" id="3.40.50.720:FF:000010">
    <property type="entry name" value="Malate dehydrogenase"/>
    <property type="match status" value="1"/>
</dbReference>
<dbReference type="FunFam" id="3.90.110.10:FF:000002">
    <property type="entry name" value="Malate dehydrogenase"/>
    <property type="match status" value="1"/>
</dbReference>
<dbReference type="Gene3D" id="3.90.110.10">
    <property type="entry name" value="Lactate dehydrogenase/glycoside hydrolase, family 4, C-terminal"/>
    <property type="match status" value="1"/>
</dbReference>
<dbReference type="Gene3D" id="3.40.50.720">
    <property type="entry name" value="NAD(P)-binding Rossmann-like Domain"/>
    <property type="match status" value="1"/>
</dbReference>
<dbReference type="HAMAP" id="MF_01517">
    <property type="entry name" value="Malate_dehydrog_2"/>
    <property type="match status" value="1"/>
</dbReference>
<dbReference type="InterPro" id="IPR001557">
    <property type="entry name" value="L-lactate/malate_DH"/>
</dbReference>
<dbReference type="InterPro" id="IPR022383">
    <property type="entry name" value="Lactate/malate_DH_C"/>
</dbReference>
<dbReference type="InterPro" id="IPR001236">
    <property type="entry name" value="Lactate/malate_DH_N"/>
</dbReference>
<dbReference type="InterPro" id="IPR015955">
    <property type="entry name" value="Lactate_DH/Glyco_Ohase_4_C"/>
</dbReference>
<dbReference type="InterPro" id="IPR001252">
    <property type="entry name" value="Malate_DH_AS"/>
</dbReference>
<dbReference type="InterPro" id="IPR010945">
    <property type="entry name" value="Malate_DH_type2"/>
</dbReference>
<dbReference type="InterPro" id="IPR036291">
    <property type="entry name" value="NAD(P)-bd_dom_sf"/>
</dbReference>
<dbReference type="NCBIfam" id="TIGR01759">
    <property type="entry name" value="MalateDH-SF1"/>
    <property type="match status" value="1"/>
</dbReference>
<dbReference type="NCBIfam" id="NF003916">
    <property type="entry name" value="PRK05442.1"/>
    <property type="match status" value="1"/>
</dbReference>
<dbReference type="PANTHER" id="PTHR23382">
    <property type="entry name" value="MALATE DEHYDROGENASE"/>
    <property type="match status" value="1"/>
</dbReference>
<dbReference type="Pfam" id="PF02866">
    <property type="entry name" value="Ldh_1_C"/>
    <property type="match status" value="1"/>
</dbReference>
<dbReference type="Pfam" id="PF00056">
    <property type="entry name" value="Ldh_1_N"/>
    <property type="match status" value="1"/>
</dbReference>
<dbReference type="PIRSF" id="PIRSF000102">
    <property type="entry name" value="Lac_mal_DH"/>
    <property type="match status" value="1"/>
</dbReference>
<dbReference type="SUPFAM" id="SSF56327">
    <property type="entry name" value="LDH C-terminal domain-like"/>
    <property type="match status" value="1"/>
</dbReference>
<dbReference type="SUPFAM" id="SSF51735">
    <property type="entry name" value="NAD(P)-binding Rossmann-fold domains"/>
    <property type="match status" value="1"/>
</dbReference>
<dbReference type="PROSITE" id="PS00068">
    <property type="entry name" value="MDH"/>
    <property type="match status" value="1"/>
</dbReference>
<gene>
    <name evidence="1" type="primary">mdh</name>
    <name type="ordered locus">Mlg_0487</name>
</gene>
<protein>
    <recommendedName>
        <fullName evidence="1">Malate dehydrogenase</fullName>
        <ecNumber evidence="1">1.1.1.37</ecNumber>
    </recommendedName>
</protein>
<reference key="1">
    <citation type="submission" date="2006-08" db="EMBL/GenBank/DDBJ databases">
        <title>Complete sequence of Alkalilimnicola ehrilichei MLHE-1.</title>
        <authorList>
            <person name="Copeland A."/>
            <person name="Lucas S."/>
            <person name="Lapidus A."/>
            <person name="Barry K."/>
            <person name="Detter J.C."/>
            <person name="Glavina del Rio T."/>
            <person name="Hammon N."/>
            <person name="Israni S."/>
            <person name="Dalin E."/>
            <person name="Tice H."/>
            <person name="Pitluck S."/>
            <person name="Sims D."/>
            <person name="Brettin T."/>
            <person name="Bruce D."/>
            <person name="Han C."/>
            <person name="Tapia R."/>
            <person name="Gilna P."/>
            <person name="Schmutz J."/>
            <person name="Larimer F."/>
            <person name="Land M."/>
            <person name="Hauser L."/>
            <person name="Kyrpides N."/>
            <person name="Mikhailova N."/>
            <person name="Oremland R.S."/>
            <person name="Hoeft S.E."/>
            <person name="Switzer-Blum J."/>
            <person name="Kulp T."/>
            <person name="King G."/>
            <person name="Tabita R."/>
            <person name="Witte B."/>
            <person name="Santini J.M."/>
            <person name="Basu P."/>
            <person name="Hollibaugh J.T."/>
            <person name="Xie G."/>
            <person name="Stolz J.F."/>
            <person name="Richardson P."/>
        </authorList>
    </citation>
    <scope>NUCLEOTIDE SEQUENCE [LARGE SCALE GENOMIC DNA]</scope>
    <source>
        <strain>ATCC BAA-1101 / DSM 17681 / MLHE-1</strain>
    </source>
</reference>
<proteinExistence type="inferred from homology"/>
<keyword id="KW-0520">NAD</keyword>
<keyword id="KW-0560">Oxidoreductase</keyword>
<keyword id="KW-1185">Reference proteome</keyword>
<keyword id="KW-0816">Tricarboxylic acid cycle</keyword>
<name>MDH_ALKEH</name>
<comment type="function">
    <text evidence="1">Catalyzes the reversible oxidation of malate to oxaloacetate.</text>
</comment>
<comment type="catalytic activity">
    <reaction evidence="1">
        <text>(S)-malate + NAD(+) = oxaloacetate + NADH + H(+)</text>
        <dbReference type="Rhea" id="RHEA:21432"/>
        <dbReference type="ChEBI" id="CHEBI:15378"/>
        <dbReference type="ChEBI" id="CHEBI:15589"/>
        <dbReference type="ChEBI" id="CHEBI:16452"/>
        <dbReference type="ChEBI" id="CHEBI:57540"/>
        <dbReference type="ChEBI" id="CHEBI:57945"/>
        <dbReference type="EC" id="1.1.1.37"/>
    </reaction>
</comment>
<comment type="similarity">
    <text evidence="1">Belongs to the LDH/MDH superfamily. MDH type 2 family.</text>
</comment>